<sequence length="212" mass="23728">MNSFSTSAFGPVAFSLGLLLVLPAAFPAPVLPGEDSKNVAAPHSQPLTSSERIDKHIRYILDGISALRKETCNRSNMCESSKEALAENNLNLPKMAEKDGCFQSGFNEDTCLVKIITGLLEFEVYLEYLQNRFESSEEQARAVQMSTKVLIQFLQKKAKNLDAITTPEPTTNASLLTKLQAQNQWLQDMTTHLILRSFKEFLQSNLRALRQM</sequence>
<proteinExistence type="evidence at transcript level"/>
<name>IL6_MACMU</name>
<feature type="signal peptide" evidence="4">
    <location>
        <begin position="1"/>
        <end position="27"/>
    </location>
</feature>
<feature type="chain" id="PRO_0000015585" description="Interleukin-6">
    <location>
        <begin position="28"/>
        <end position="212"/>
    </location>
</feature>
<feature type="modified residue" description="Phosphoserine" evidence="2">
    <location>
        <position position="81"/>
    </location>
</feature>
<feature type="glycosylation site" description="N-linked (GlcNAc...) asparagine" evidence="4">
    <location>
        <position position="73"/>
    </location>
</feature>
<feature type="glycosylation site" description="N-linked (GlcNAc...) asparagine" evidence="4">
    <location>
        <position position="172"/>
    </location>
</feature>
<feature type="disulfide bond" evidence="1">
    <location>
        <begin position="72"/>
        <end position="78"/>
    </location>
</feature>
<feature type="disulfide bond" evidence="1">
    <location>
        <begin position="101"/>
        <end position="111"/>
    </location>
</feature>
<evidence type="ECO:0000250" key="1"/>
<evidence type="ECO:0000250" key="2">
    <source>
        <dbReference type="UniProtKB" id="P05231"/>
    </source>
</evidence>
<evidence type="ECO:0000250" key="3">
    <source>
        <dbReference type="UniProtKB" id="P08505"/>
    </source>
</evidence>
<evidence type="ECO:0000255" key="4"/>
<evidence type="ECO:0000305" key="5"/>
<organism>
    <name type="scientific">Macaca mulatta</name>
    <name type="common">Rhesus macaque</name>
    <dbReference type="NCBI Taxonomy" id="9544"/>
    <lineage>
        <taxon>Eukaryota</taxon>
        <taxon>Metazoa</taxon>
        <taxon>Chordata</taxon>
        <taxon>Craniata</taxon>
        <taxon>Vertebrata</taxon>
        <taxon>Euteleostomi</taxon>
        <taxon>Mammalia</taxon>
        <taxon>Eutheria</taxon>
        <taxon>Euarchontoglires</taxon>
        <taxon>Primates</taxon>
        <taxon>Haplorrhini</taxon>
        <taxon>Catarrhini</taxon>
        <taxon>Cercopithecidae</taxon>
        <taxon>Cercopithecinae</taxon>
        <taxon>Macaca</taxon>
    </lineage>
</organism>
<gene>
    <name type="primary">IL6</name>
</gene>
<protein>
    <recommendedName>
        <fullName>Interleukin-6</fullName>
        <shortName>IL-6</shortName>
    </recommendedName>
</protein>
<dbReference type="EMBL" id="L26028">
    <property type="protein sequence ID" value="AAA99978.1"/>
    <property type="molecule type" value="mRNA"/>
</dbReference>
<dbReference type="SMR" id="P51494"/>
<dbReference type="FunCoup" id="P51494">
    <property type="interactions" value="1133"/>
</dbReference>
<dbReference type="STRING" id="9544.ENSMMUP00000049077"/>
<dbReference type="GlyCosmos" id="P51494">
    <property type="glycosylation" value="2 sites, No reported glycans"/>
</dbReference>
<dbReference type="PaxDb" id="9544-ENSMMUP00000026278"/>
<dbReference type="eggNOG" id="ENOG502S7Q4">
    <property type="taxonomic scope" value="Eukaryota"/>
</dbReference>
<dbReference type="InParanoid" id="P51494"/>
<dbReference type="Proteomes" id="UP000006718">
    <property type="component" value="Unassembled WGS sequence"/>
</dbReference>
<dbReference type="GO" id="GO:0005615">
    <property type="term" value="C:extracellular space"/>
    <property type="evidence" value="ECO:0000318"/>
    <property type="project" value="GO_Central"/>
</dbReference>
<dbReference type="GO" id="GO:0005896">
    <property type="term" value="C:interleukin-6 receptor complex"/>
    <property type="evidence" value="ECO:0000318"/>
    <property type="project" value="GO_Central"/>
</dbReference>
<dbReference type="GO" id="GO:0005125">
    <property type="term" value="F:cytokine activity"/>
    <property type="evidence" value="ECO:0000318"/>
    <property type="project" value="GO_Central"/>
</dbReference>
<dbReference type="GO" id="GO:0008083">
    <property type="term" value="F:growth factor activity"/>
    <property type="evidence" value="ECO:0000318"/>
    <property type="project" value="GO_Central"/>
</dbReference>
<dbReference type="GO" id="GO:0005138">
    <property type="term" value="F:interleukin-6 receptor binding"/>
    <property type="evidence" value="ECO:0007669"/>
    <property type="project" value="InterPro"/>
</dbReference>
<dbReference type="GO" id="GO:0006953">
    <property type="term" value="P:acute-phase response"/>
    <property type="evidence" value="ECO:0007669"/>
    <property type="project" value="UniProtKB-KW"/>
</dbReference>
<dbReference type="GO" id="GO:0042593">
    <property type="term" value="P:glucose homeostasis"/>
    <property type="evidence" value="ECO:0000250"/>
    <property type="project" value="UniProtKB"/>
</dbReference>
<dbReference type="GO" id="GO:0072574">
    <property type="term" value="P:hepatocyte proliferation"/>
    <property type="evidence" value="ECO:0000250"/>
    <property type="project" value="UniProtKB"/>
</dbReference>
<dbReference type="GO" id="GO:0070102">
    <property type="term" value="P:interleukin-6-mediated signaling pathway"/>
    <property type="evidence" value="ECO:0000250"/>
    <property type="project" value="UniProtKB"/>
</dbReference>
<dbReference type="GO" id="GO:0097421">
    <property type="term" value="P:liver regeneration"/>
    <property type="evidence" value="ECO:0000250"/>
    <property type="project" value="UniProtKB"/>
</dbReference>
<dbReference type="GO" id="GO:0008284">
    <property type="term" value="P:positive regulation of cell population proliferation"/>
    <property type="evidence" value="ECO:0000318"/>
    <property type="project" value="GO_Central"/>
</dbReference>
<dbReference type="GO" id="GO:0051240">
    <property type="term" value="P:positive regulation of multicellular organismal process"/>
    <property type="evidence" value="ECO:0007669"/>
    <property type="project" value="UniProtKB-ARBA"/>
</dbReference>
<dbReference type="GO" id="GO:0046427">
    <property type="term" value="P:positive regulation of receptor signaling pathway via JAK-STAT"/>
    <property type="evidence" value="ECO:0000318"/>
    <property type="project" value="GO_Central"/>
</dbReference>
<dbReference type="GO" id="GO:1904894">
    <property type="term" value="P:positive regulation of receptor signaling pathway via STAT"/>
    <property type="evidence" value="ECO:0000250"/>
    <property type="project" value="UniProtKB"/>
</dbReference>
<dbReference type="GO" id="GO:0070092">
    <property type="term" value="P:regulation of glucagon secretion"/>
    <property type="evidence" value="ECO:0000250"/>
    <property type="project" value="UniProtKB"/>
</dbReference>
<dbReference type="GO" id="GO:0050796">
    <property type="term" value="P:regulation of insulin secretion"/>
    <property type="evidence" value="ECO:0000250"/>
    <property type="project" value="UniProtKB"/>
</dbReference>
<dbReference type="GO" id="GO:0014823">
    <property type="term" value="P:response to activity"/>
    <property type="evidence" value="ECO:0000250"/>
    <property type="project" value="UniProtKB"/>
</dbReference>
<dbReference type="GO" id="GO:0072540">
    <property type="term" value="P:T-helper 17 cell lineage commitment"/>
    <property type="evidence" value="ECO:0000250"/>
    <property type="project" value="UniProtKB"/>
</dbReference>
<dbReference type="GO" id="GO:0010573">
    <property type="term" value="P:vascular endothelial growth factor production"/>
    <property type="evidence" value="ECO:0000250"/>
    <property type="project" value="UniProtKB"/>
</dbReference>
<dbReference type="FunFam" id="1.20.1250.10:FF:000006">
    <property type="entry name" value="Interleukin-6"/>
    <property type="match status" value="1"/>
</dbReference>
<dbReference type="Gene3D" id="1.20.1250.10">
    <property type="match status" value="1"/>
</dbReference>
<dbReference type="InterPro" id="IPR009079">
    <property type="entry name" value="4_helix_cytokine-like_core"/>
</dbReference>
<dbReference type="InterPro" id="IPR003574">
    <property type="entry name" value="IL-6-like"/>
</dbReference>
<dbReference type="InterPro" id="IPR030474">
    <property type="entry name" value="IL-6/GCSF/MGF"/>
</dbReference>
<dbReference type="InterPro" id="IPR030473">
    <property type="entry name" value="IL6/GCSF/MGF_CS"/>
</dbReference>
<dbReference type="PANTHER" id="PTHR48494">
    <property type="entry name" value="INTERLEUKIN-6"/>
    <property type="match status" value="1"/>
</dbReference>
<dbReference type="PANTHER" id="PTHR48494:SF1">
    <property type="entry name" value="INTERLEUKIN-6"/>
    <property type="match status" value="1"/>
</dbReference>
<dbReference type="Pfam" id="PF00489">
    <property type="entry name" value="IL6"/>
    <property type="match status" value="1"/>
</dbReference>
<dbReference type="PIRSF" id="PIRSF001935">
    <property type="entry name" value="IL6_MGF_GCSF"/>
    <property type="match status" value="1"/>
</dbReference>
<dbReference type="PRINTS" id="PR00433">
    <property type="entry name" value="IL6GCSFMGF"/>
</dbReference>
<dbReference type="PRINTS" id="PR00434">
    <property type="entry name" value="INTERLEUKIN6"/>
</dbReference>
<dbReference type="SMART" id="SM00126">
    <property type="entry name" value="IL6"/>
    <property type="match status" value="1"/>
</dbReference>
<dbReference type="SUPFAM" id="SSF47266">
    <property type="entry name" value="4-helical cytokines"/>
    <property type="match status" value="1"/>
</dbReference>
<dbReference type="PROSITE" id="PS00254">
    <property type="entry name" value="INTERLEUKIN_6"/>
    <property type="match status" value="1"/>
</dbReference>
<comment type="function">
    <text evidence="2">Cytokine with a wide variety of biological functions in immunity, tissue regeneration, and metabolism. Binds to IL6R, then the complex associates to the signaling subunit IL6ST/gp130 to trigger the intracellular IL6-signaling pathway. The interaction with the membrane-bound IL6R and IL6ST stimulates 'classic signaling', whereas the binding of IL6 and soluble IL6R to IL6ST stimulates 'trans-signaling'. Alternatively, 'cluster signaling' occurs when membrane-bound IL6:IL6R complexes on transmitter cells activate IL6ST receptors on neighboring receiver cells.</text>
</comment>
<comment type="function">
    <text evidence="2 3">IL6 is a potent inducer of the acute phase response. Rapid production of IL6 contributes to host defense during infection and tissue injury, but excessive IL6 synthesis is involved in disease pathology. In the innate immune response, is synthesized by myeloid cells, such as macrophages and dendritic cells, upon recognition of pathogens through toll-like receptors (TLRs) at the site of infection or tissue injury (By similarity). In the adaptive immune response, is required for the differentiation of B cells into immunoglobulin-secreting cells. Plays a major role in the differentiation of CD4(+) T cell subsets. Essential factor for the development of T follicular helper (Tfh) cells that are required for the induction of germinal-center formation. Required to drive naive CD4(+) T cells to the Th17 lineage. Also required for proliferation of myeloma cells and the survival of plasmablast cells (By similarity).</text>
</comment>
<comment type="function">
    <text evidence="2 3">Acts as an essential factor in bone homeostasis and on vessels directly or indirectly by induction of VEGF, resulting in increased angiogenesis activity and vascular permeability. Induces, through 'trans-signaling' and synergistically with IL1B and TNF, the production of VEGF. Involved in metabolic controls, is discharged into the bloodstream after muscle contraction increasing lipolysis and improving insulin resistance (By similarity). 'Trans-signaling' in central nervous system also regulates energy and glucose homeostasis. Mediates, through GLP-1, crosstalk between insulin-sensitive tissues, intestinal L cells and pancreatic islets to adapt to changes in insulin demand (By similarity). Also acts as a myokine (By similarity). Plays a protective role during liver injury, being required for maintenance of tissue regeneration (By similarity). Also has a pivotal role in iron metabolism by regulating HAMP/hepcidin expression upon inflammation or bacterial infection (By similarity). Through activation of IL6ST-YAP-NOTCH pathway, induces inflammation-induced epithelial regeneration (By similarity).</text>
</comment>
<comment type="subunit">
    <text evidence="2">Component of a hexamer of two molecules each of IL6, IL6R and IL6ST; first binds to IL6R to associate with the signaling subunit IL6ST. Interacts with IL6R (via the N-terminal ectodomain); this interaction may be affected by IL6R-binding with SORL1, hence decreasing IL6 cis signaling. Interacts with SORL1 (via the N-terminal ectodomain); this interaction leads to IL6 internalization and lysosomal degradation. May form a trimeric complex with the soluble SORL1 ectodomain and soluble IL6R receptor; this interaction might stabilize circulating IL6, hence promoting IL6 trans signaling.</text>
</comment>
<comment type="subcellular location">
    <subcellularLocation>
        <location evidence="2">Secreted</location>
    </subcellularLocation>
</comment>
<comment type="similarity">
    <text evidence="5">Belongs to the IL-6 superfamily.</text>
</comment>
<reference key="1">
    <citation type="journal article" date="1995" name="J. Immunol.">
        <title>Comparative sequence analysis of cytokine genes from human and nonhuman primates.</title>
        <authorList>
            <person name="Villinger F.J."/>
            <person name="Brar S.S."/>
            <person name="Mayne A.E."/>
            <person name="Chikkala N."/>
            <person name="Ansari A.A."/>
        </authorList>
    </citation>
    <scope>NUCLEOTIDE SEQUENCE [MRNA]</scope>
    <source>
        <strain>RAC 2</strain>
    </source>
</reference>
<keyword id="KW-0011">Acute phase</keyword>
<keyword id="KW-0202">Cytokine</keyword>
<keyword id="KW-1015">Disulfide bond</keyword>
<keyword id="KW-0325">Glycoprotein</keyword>
<keyword id="KW-0339">Growth factor</keyword>
<keyword id="KW-0597">Phosphoprotein</keyword>
<keyword id="KW-1185">Reference proteome</keyword>
<keyword id="KW-0964">Secreted</keyword>
<keyword id="KW-0732">Signal</keyword>
<accession>P51494</accession>